<protein>
    <recommendedName>
        <fullName evidence="1">DNA-directed RNA polymerase subunit omega</fullName>
        <shortName evidence="1">RNAP omega subunit</shortName>
        <ecNumber evidence="1">2.7.7.6</ecNumber>
    </recommendedName>
    <alternativeName>
        <fullName evidence="1">RNA polymerase omega subunit</fullName>
    </alternativeName>
    <alternativeName>
        <fullName evidence="1">Transcriptase subunit omega</fullName>
    </alternativeName>
</protein>
<gene>
    <name evidence="1" type="primary">rpoZ</name>
    <name type="ordered locus">lin1940</name>
</gene>
<comment type="function">
    <text evidence="1">Promotes RNA polymerase assembly. Latches the N- and C-terminal regions of the beta' subunit thereby facilitating its interaction with the beta and alpha subunits.</text>
</comment>
<comment type="catalytic activity">
    <reaction evidence="1">
        <text>RNA(n) + a ribonucleoside 5'-triphosphate = RNA(n+1) + diphosphate</text>
        <dbReference type="Rhea" id="RHEA:21248"/>
        <dbReference type="Rhea" id="RHEA-COMP:14527"/>
        <dbReference type="Rhea" id="RHEA-COMP:17342"/>
        <dbReference type="ChEBI" id="CHEBI:33019"/>
        <dbReference type="ChEBI" id="CHEBI:61557"/>
        <dbReference type="ChEBI" id="CHEBI:140395"/>
        <dbReference type="EC" id="2.7.7.6"/>
    </reaction>
</comment>
<comment type="subunit">
    <text evidence="1">The RNAP catalytic core consists of 2 alpha, 1 beta, 1 beta' and 1 omega subunit. When a sigma factor is associated with the core the holoenzyme is formed, which can initiate transcription.</text>
</comment>
<comment type="similarity">
    <text evidence="1">Belongs to the RNA polymerase subunit omega family.</text>
</comment>
<feature type="chain" id="PRO_0000128948" description="DNA-directed RNA polymerase subunit omega">
    <location>
        <begin position="1"/>
        <end position="67"/>
    </location>
</feature>
<reference key="1">
    <citation type="journal article" date="2001" name="Science">
        <title>Comparative genomics of Listeria species.</title>
        <authorList>
            <person name="Glaser P."/>
            <person name="Frangeul L."/>
            <person name="Buchrieser C."/>
            <person name="Rusniok C."/>
            <person name="Amend A."/>
            <person name="Baquero F."/>
            <person name="Berche P."/>
            <person name="Bloecker H."/>
            <person name="Brandt P."/>
            <person name="Chakraborty T."/>
            <person name="Charbit A."/>
            <person name="Chetouani F."/>
            <person name="Couve E."/>
            <person name="de Daruvar A."/>
            <person name="Dehoux P."/>
            <person name="Domann E."/>
            <person name="Dominguez-Bernal G."/>
            <person name="Duchaud E."/>
            <person name="Durant L."/>
            <person name="Dussurget O."/>
            <person name="Entian K.-D."/>
            <person name="Fsihi H."/>
            <person name="Garcia-del Portillo F."/>
            <person name="Garrido P."/>
            <person name="Gautier L."/>
            <person name="Goebel W."/>
            <person name="Gomez-Lopez N."/>
            <person name="Hain T."/>
            <person name="Hauf J."/>
            <person name="Jackson D."/>
            <person name="Jones L.-M."/>
            <person name="Kaerst U."/>
            <person name="Kreft J."/>
            <person name="Kuhn M."/>
            <person name="Kunst F."/>
            <person name="Kurapkat G."/>
            <person name="Madueno E."/>
            <person name="Maitournam A."/>
            <person name="Mata Vicente J."/>
            <person name="Ng E."/>
            <person name="Nedjari H."/>
            <person name="Nordsiek G."/>
            <person name="Novella S."/>
            <person name="de Pablos B."/>
            <person name="Perez-Diaz J.-C."/>
            <person name="Purcell R."/>
            <person name="Remmel B."/>
            <person name="Rose M."/>
            <person name="Schlueter T."/>
            <person name="Simoes N."/>
            <person name="Tierrez A."/>
            <person name="Vazquez-Boland J.-A."/>
            <person name="Voss H."/>
            <person name="Wehland J."/>
            <person name="Cossart P."/>
        </authorList>
    </citation>
    <scope>NUCLEOTIDE SEQUENCE [LARGE SCALE GENOMIC DNA]</scope>
    <source>
        <strain>ATCC BAA-680 / CLIP 11262</strain>
    </source>
</reference>
<organism>
    <name type="scientific">Listeria innocua serovar 6a (strain ATCC BAA-680 / CLIP 11262)</name>
    <dbReference type="NCBI Taxonomy" id="272626"/>
    <lineage>
        <taxon>Bacteria</taxon>
        <taxon>Bacillati</taxon>
        <taxon>Bacillota</taxon>
        <taxon>Bacilli</taxon>
        <taxon>Bacillales</taxon>
        <taxon>Listeriaceae</taxon>
        <taxon>Listeria</taxon>
    </lineage>
</organism>
<name>RPOZ_LISIN</name>
<keyword id="KW-0240">DNA-directed RNA polymerase</keyword>
<keyword id="KW-0548">Nucleotidyltransferase</keyword>
<keyword id="KW-0804">Transcription</keyword>
<keyword id="KW-0808">Transferase</keyword>
<dbReference type="EC" id="2.7.7.6" evidence="1"/>
<dbReference type="EMBL" id="AL596170">
    <property type="protein sequence ID" value="CAC97170.1"/>
    <property type="molecule type" value="Genomic_DNA"/>
</dbReference>
<dbReference type="PIR" id="AB1675">
    <property type="entry name" value="AB1675"/>
</dbReference>
<dbReference type="RefSeq" id="WP_003762944.1">
    <property type="nucleotide sequence ID" value="NC_003212.1"/>
</dbReference>
<dbReference type="SMR" id="Q92AI2"/>
<dbReference type="STRING" id="272626.gene:17566298"/>
<dbReference type="GeneID" id="93235278"/>
<dbReference type="KEGG" id="lin:lin1940"/>
<dbReference type="eggNOG" id="COG1758">
    <property type="taxonomic scope" value="Bacteria"/>
</dbReference>
<dbReference type="HOGENOM" id="CLU_125406_6_0_9"/>
<dbReference type="OrthoDB" id="9815459at2"/>
<dbReference type="Proteomes" id="UP000002513">
    <property type="component" value="Chromosome"/>
</dbReference>
<dbReference type="GO" id="GO:0000428">
    <property type="term" value="C:DNA-directed RNA polymerase complex"/>
    <property type="evidence" value="ECO:0007669"/>
    <property type="project" value="UniProtKB-KW"/>
</dbReference>
<dbReference type="GO" id="GO:0003677">
    <property type="term" value="F:DNA binding"/>
    <property type="evidence" value="ECO:0007669"/>
    <property type="project" value="UniProtKB-UniRule"/>
</dbReference>
<dbReference type="GO" id="GO:0003899">
    <property type="term" value="F:DNA-directed RNA polymerase activity"/>
    <property type="evidence" value="ECO:0007669"/>
    <property type="project" value="UniProtKB-UniRule"/>
</dbReference>
<dbReference type="GO" id="GO:0006351">
    <property type="term" value="P:DNA-templated transcription"/>
    <property type="evidence" value="ECO:0007669"/>
    <property type="project" value="UniProtKB-UniRule"/>
</dbReference>
<dbReference type="Gene3D" id="3.90.940.10">
    <property type="match status" value="1"/>
</dbReference>
<dbReference type="HAMAP" id="MF_00366">
    <property type="entry name" value="RNApol_bact_RpoZ"/>
    <property type="match status" value="1"/>
</dbReference>
<dbReference type="InterPro" id="IPR003716">
    <property type="entry name" value="DNA-dir_RNA_pol_omega"/>
</dbReference>
<dbReference type="InterPro" id="IPR006110">
    <property type="entry name" value="Pol_omega/Rpo6/RPB6"/>
</dbReference>
<dbReference type="InterPro" id="IPR036161">
    <property type="entry name" value="RPB6/omega-like_sf"/>
</dbReference>
<dbReference type="NCBIfam" id="TIGR00690">
    <property type="entry name" value="rpoZ"/>
    <property type="match status" value="1"/>
</dbReference>
<dbReference type="PANTHER" id="PTHR34476">
    <property type="entry name" value="DNA-DIRECTED RNA POLYMERASE SUBUNIT OMEGA"/>
    <property type="match status" value="1"/>
</dbReference>
<dbReference type="PANTHER" id="PTHR34476:SF1">
    <property type="entry name" value="DNA-DIRECTED RNA POLYMERASE SUBUNIT OMEGA"/>
    <property type="match status" value="1"/>
</dbReference>
<dbReference type="Pfam" id="PF01192">
    <property type="entry name" value="RNA_pol_Rpb6"/>
    <property type="match status" value="1"/>
</dbReference>
<dbReference type="SMART" id="SM01409">
    <property type="entry name" value="RNA_pol_Rpb6"/>
    <property type="match status" value="1"/>
</dbReference>
<dbReference type="SUPFAM" id="SSF63562">
    <property type="entry name" value="RPB6/omega subunit-like"/>
    <property type="match status" value="1"/>
</dbReference>
<evidence type="ECO:0000255" key="1">
    <source>
        <dbReference type="HAMAP-Rule" id="MF_00366"/>
    </source>
</evidence>
<accession>Q92AI2</accession>
<proteinExistence type="inferred from homology"/>
<sequence length="67" mass="7598">MLYPSIDNLLLKIDSKYSLVTVAAKRARYMQLENDKGVLPSYQSDKFVGKALEEIHAGKLVLQNDEK</sequence>